<reference key="1">
    <citation type="journal article" date="1997" name="Nature">
        <title>The nucleotide sequence of Saccharomyces cerevisiae chromosome IX.</title>
        <authorList>
            <person name="Churcher C.M."/>
            <person name="Bowman S."/>
            <person name="Badcock K."/>
            <person name="Bankier A.T."/>
            <person name="Brown D."/>
            <person name="Chillingworth T."/>
            <person name="Connor R."/>
            <person name="Devlin K."/>
            <person name="Gentles S."/>
            <person name="Hamlin N."/>
            <person name="Harris D.E."/>
            <person name="Horsnell T."/>
            <person name="Hunt S."/>
            <person name="Jagels K."/>
            <person name="Jones M."/>
            <person name="Lye G."/>
            <person name="Moule S."/>
            <person name="Odell C."/>
            <person name="Pearson D."/>
            <person name="Rajandream M.A."/>
            <person name="Rice P."/>
            <person name="Rowley N."/>
            <person name="Skelton J."/>
            <person name="Smith V."/>
            <person name="Walsh S.V."/>
            <person name="Whitehead S."/>
            <person name="Barrell B.G."/>
        </authorList>
    </citation>
    <scope>NUCLEOTIDE SEQUENCE [LARGE SCALE GENOMIC DNA]</scope>
    <source>
        <strain>ATCC 204508 / S288c</strain>
    </source>
</reference>
<reference key="2">
    <citation type="journal article" date="2014" name="G3 (Bethesda)">
        <title>The reference genome sequence of Saccharomyces cerevisiae: Then and now.</title>
        <authorList>
            <person name="Engel S.R."/>
            <person name="Dietrich F.S."/>
            <person name="Fisk D.G."/>
            <person name="Binkley G."/>
            <person name="Balakrishnan R."/>
            <person name="Costanzo M.C."/>
            <person name="Dwight S.S."/>
            <person name="Hitz B.C."/>
            <person name="Karra K."/>
            <person name="Nash R.S."/>
            <person name="Weng S."/>
            <person name="Wong E.D."/>
            <person name="Lloyd P."/>
            <person name="Skrzypek M.S."/>
            <person name="Miyasato S.R."/>
            <person name="Simison M."/>
            <person name="Cherry J.M."/>
        </authorList>
    </citation>
    <scope>GENOME REANNOTATION</scope>
    <source>
        <strain>ATCC 204508 / S288c</strain>
    </source>
</reference>
<reference key="3">
    <citation type="journal article" date="2003" name="Science">
        <title>Finding functional features in Saccharomyces genomes by phylogenetic footprinting.</title>
        <authorList>
            <person name="Cliften P.F."/>
            <person name="Sudarsanam P."/>
            <person name="Desikan A."/>
            <person name="Fulton L."/>
            <person name="Fulton B."/>
            <person name="Majors J."/>
            <person name="Waterston R."/>
            <person name="Cohen B.A."/>
            <person name="Johnston M."/>
        </authorList>
    </citation>
    <scope>GENOME REANNOTATION</scope>
</reference>
<comment type="subcellular location">
    <subcellularLocation>
        <location evidence="2">Membrane</location>
        <topology evidence="2">Multi-pass membrane protein</topology>
    </subcellularLocation>
</comment>
<proteinExistence type="predicted"/>
<name>YI102_YEAST</name>
<sequence length="75" mass="8502">MNRFVIICLLFTYYVIWSLLPIFEIENSNPVVSLLFPISSNVAIFLPIFLLLIGFTLTGSVLGVLLIRSDKKKKV</sequence>
<dbReference type="EMBL" id="Z38125">
    <property type="status" value="NOT_ANNOTATED_CDS"/>
    <property type="molecule type" value="Genomic_DNA"/>
</dbReference>
<dbReference type="EMBL" id="BK006942">
    <property type="protein sequence ID" value="DAA08451.1"/>
    <property type="molecule type" value="Genomic_DNA"/>
</dbReference>
<dbReference type="RefSeq" id="NP_001032579.1">
    <property type="nucleotide sequence ID" value="NM_001184686.1"/>
</dbReference>
<dbReference type="SMR" id="Q2V2P5"/>
<dbReference type="BioGRID" id="531945">
    <property type="interactions" value="3"/>
</dbReference>
<dbReference type="FunCoup" id="Q2V2P5">
    <property type="interactions" value="6"/>
</dbReference>
<dbReference type="STRING" id="4932.YIL102C-A"/>
<dbReference type="PaxDb" id="4932-YIL102C-A"/>
<dbReference type="EnsemblFungi" id="YIL102C-A_mRNA">
    <property type="protein sequence ID" value="YIL102C-A"/>
    <property type="gene ID" value="YIL102C-A"/>
</dbReference>
<dbReference type="GeneID" id="3799974"/>
<dbReference type="KEGG" id="sce:YIL102C-A"/>
<dbReference type="AGR" id="SGD:S000113587"/>
<dbReference type="SGD" id="S000113587">
    <property type="gene designation" value="YIL102C-A"/>
</dbReference>
<dbReference type="VEuPathDB" id="FungiDB:YIL102C-A"/>
<dbReference type="eggNOG" id="ENOG502SD3Q">
    <property type="taxonomic scope" value="Eukaryota"/>
</dbReference>
<dbReference type="HOGENOM" id="CLU_150144_2_1_1"/>
<dbReference type="InParanoid" id="Q2V2P5"/>
<dbReference type="OMA" id="NRLTIWI"/>
<dbReference type="OrthoDB" id="4064097at2759"/>
<dbReference type="BioCyc" id="YEAST:G3O-31478-MONOMER"/>
<dbReference type="BioGRID-ORCS" id="3799974">
    <property type="hits" value="0 hits in 10 CRISPR screens"/>
</dbReference>
<dbReference type="PRO" id="PR:Q2V2P5"/>
<dbReference type="Proteomes" id="UP000002311">
    <property type="component" value="Chromosome IX"/>
</dbReference>
<dbReference type="RNAct" id="Q2V2P5">
    <property type="molecule type" value="protein"/>
</dbReference>
<dbReference type="GO" id="GO:0005783">
    <property type="term" value="C:endoplasmic reticulum"/>
    <property type="evidence" value="ECO:0007005"/>
    <property type="project" value="SGD"/>
</dbReference>
<dbReference type="GO" id="GO:0005789">
    <property type="term" value="C:endoplasmic reticulum membrane"/>
    <property type="evidence" value="ECO:0007669"/>
    <property type="project" value="InterPro"/>
</dbReference>
<dbReference type="GO" id="GO:0030234">
    <property type="term" value="F:enzyme regulator activity"/>
    <property type="evidence" value="ECO:0007669"/>
    <property type="project" value="InterPro"/>
</dbReference>
<dbReference type="GO" id="GO:0180047">
    <property type="term" value="P:dolichol phosphate mannose biosynthetic process"/>
    <property type="evidence" value="ECO:0007669"/>
    <property type="project" value="InterPro"/>
</dbReference>
<dbReference type="InterPro" id="IPR009914">
    <property type="entry name" value="DPM2"/>
</dbReference>
<dbReference type="Pfam" id="PF07297">
    <property type="entry name" value="DPM2"/>
    <property type="match status" value="1"/>
</dbReference>
<keyword id="KW-0472">Membrane</keyword>
<keyword id="KW-1185">Reference proteome</keyword>
<keyword id="KW-0812">Transmembrane</keyword>
<keyword id="KW-1133">Transmembrane helix</keyword>
<organism>
    <name type="scientific">Saccharomyces cerevisiae (strain ATCC 204508 / S288c)</name>
    <name type="common">Baker's yeast</name>
    <dbReference type="NCBI Taxonomy" id="559292"/>
    <lineage>
        <taxon>Eukaryota</taxon>
        <taxon>Fungi</taxon>
        <taxon>Dikarya</taxon>
        <taxon>Ascomycota</taxon>
        <taxon>Saccharomycotina</taxon>
        <taxon>Saccharomycetes</taxon>
        <taxon>Saccharomycetales</taxon>
        <taxon>Saccharomycetaceae</taxon>
        <taxon>Saccharomyces</taxon>
    </lineage>
</organism>
<accession>Q2V2P5</accession>
<accession>D6VVI5</accession>
<gene>
    <name type="ordered locus">YIL102C-A</name>
</gene>
<evidence type="ECO:0000255" key="1"/>
<evidence type="ECO:0000305" key="2"/>
<protein>
    <recommendedName>
        <fullName>Uncharacterized protein YIL102C-A</fullName>
    </recommendedName>
</protein>
<feature type="chain" id="PRO_0000245402" description="Uncharacterized protein YIL102C-A">
    <location>
        <begin position="1"/>
        <end position="75"/>
    </location>
</feature>
<feature type="transmembrane region" description="Helical" evidence="1">
    <location>
        <begin position="5"/>
        <end position="25"/>
    </location>
</feature>
<feature type="transmembrane region" description="Helical" evidence="1">
    <location>
        <begin position="42"/>
        <end position="62"/>
    </location>
</feature>